<keyword id="KW-0472">Membrane</keyword>
<keyword id="KW-0520">NAD</keyword>
<keyword id="KW-0521">NADP</keyword>
<keyword id="KW-0618">Plastoquinone</keyword>
<keyword id="KW-0874">Quinone</keyword>
<keyword id="KW-1185">Reference proteome</keyword>
<keyword id="KW-0793">Thylakoid</keyword>
<keyword id="KW-1278">Translocase</keyword>
<keyword id="KW-0813">Transport</keyword>
<accession>B2J6S5</accession>
<reference key="1">
    <citation type="journal article" date="2013" name="Plant Physiol.">
        <title>A Nostoc punctiforme Sugar Transporter Necessary to Establish a Cyanobacterium-Plant Symbiosis.</title>
        <authorList>
            <person name="Ekman M."/>
            <person name="Picossi S."/>
            <person name="Campbell E.L."/>
            <person name="Meeks J.C."/>
            <person name="Flores E."/>
        </authorList>
    </citation>
    <scope>NUCLEOTIDE SEQUENCE [LARGE SCALE GENOMIC DNA]</scope>
    <source>
        <strain>ATCC 29133 / PCC 73102</strain>
    </source>
</reference>
<dbReference type="EC" id="7.1.1.-" evidence="1"/>
<dbReference type="EMBL" id="CP001037">
    <property type="protein sequence ID" value="ACC83851.1"/>
    <property type="molecule type" value="Genomic_DNA"/>
</dbReference>
<dbReference type="RefSeq" id="WP_012411795.1">
    <property type="nucleotide sequence ID" value="NC_010628.1"/>
</dbReference>
<dbReference type="SMR" id="B2J6S5"/>
<dbReference type="STRING" id="63737.Npun_R5546"/>
<dbReference type="EnsemblBacteria" id="ACC83851">
    <property type="protein sequence ID" value="ACC83851"/>
    <property type="gene ID" value="Npun_R5546"/>
</dbReference>
<dbReference type="KEGG" id="npu:Npun_R5546"/>
<dbReference type="eggNOG" id="COG0852">
    <property type="taxonomic scope" value="Bacteria"/>
</dbReference>
<dbReference type="HOGENOM" id="CLU_042628_9_1_3"/>
<dbReference type="OrthoDB" id="9803286at2"/>
<dbReference type="PhylomeDB" id="B2J6S5"/>
<dbReference type="Proteomes" id="UP000001191">
    <property type="component" value="Chromosome"/>
</dbReference>
<dbReference type="GO" id="GO:0031676">
    <property type="term" value="C:plasma membrane-derived thylakoid membrane"/>
    <property type="evidence" value="ECO:0007669"/>
    <property type="project" value="UniProtKB-SubCell"/>
</dbReference>
<dbReference type="GO" id="GO:0008137">
    <property type="term" value="F:NADH dehydrogenase (ubiquinone) activity"/>
    <property type="evidence" value="ECO:0007669"/>
    <property type="project" value="InterPro"/>
</dbReference>
<dbReference type="GO" id="GO:0048038">
    <property type="term" value="F:quinone binding"/>
    <property type="evidence" value="ECO:0007669"/>
    <property type="project" value="UniProtKB-KW"/>
</dbReference>
<dbReference type="GO" id="GO:0019684">
    <property type="term" value="P:photosynthesis, light reaction"/>
    <property type="evidence" value="ECO:0007669"/>
    <property type="project" value="UniProtKB-UniRule"/>
</dbReference>
<dbReference type="Gene3D" id="3.30.460.80">
    <property type="entry name" value="NADH:ubiquinone oxidoreductase, 30kDa subunit"/>
    <property type="match status" value="1"/>
</dbReference>
<dbReference type="HAMAP" id="MF_01357">
    <property type="entry name" value="NDH1_NuoC"/>
    <property type="match status" value="1"/>
</dbReference>
<dbReference type="InterPro" id="IPR010218">
    <property type="entry name" value="NADH_DH_suC"/>
</dbReference>
<dbReference type="InterPro" id="IPR037232">
    <property type="entry name" value="NADH_quin_OxRdtase_su_C/D-like"/>
</dbReference>
<dbReference type="InterPro" id="IPR001268">
    <property type="entry name" value="NADH_UbQ_OxRdtase_30kDa_su"/>
</dbReference>
<dbReference type="InterPro" id="IPR020396">
    <property type="entry name" value="NADH_UbQ_OxRdtase_CS"/>
</dbReference>
<dbReference type="NCBIfam" id="NF009141">
    <property type="entry name" value="PRK12494.1"/>
    <property type="match status" value="1"/>
</dbReference>
<dbReference type="PANTHER" id="PTHR10884:SF14">
    <property type="entry name" value="NADH DEHYDROGENASE [UBIQUINONE] IRON-SULFUR PROTEIN 3, MITOCHONDRIAL"/>
    <property type="match status" value="1"/>
</dbReference>
<dbReference type="PANTHER" id="PTHR10884">
    <property type="entry name" value="NADH DEHYDROGENASE UBIQUINONE IRON-SULFUR PROTEIN 3"/>
    <property type="match status" value="1"/>
</dbReference>
<dbReference type="Pfam" id="PF00329">
    <property type="entry name" value="Complex1_30kDa"/>
    <property type="match status" value="1"/>
</dbReference>
<dbReference type="SUPFAM" id="SSF143243">
    <property type="entry name" value="Nqo5-like"/>
    <property type="match status" value="1"/>
</dbReference>
<dbReference type="PROSITE" id="PS00542">
    <property type="entry name" value="COMPLEX1_30K"/>
    <property type="match status" value="1"/>
</dbReference>
<protein>
    <recommendedName>
        <fullName evidence="1">NAD(P)H-quinone oxidoreductase subunit J</fullName>
        <ecNumber evidence="1">7.1.1.-</ecNumber>
    </recommendedName>
    <alternativeName>
        <fullName>NAD(P)H dehydrogenase subunit J</fullName>
    </alternativeName>
    <alternativeName>
        <fullName evidence="1">NADH-plastoquinone oxidoreductase subunit J</fullName>
    </alternativeName>
    <alternativeName>
        <fullName evidence="1">NDH-1 subunit J</fullName>
        <shortName evidence="1">NDH-J</shortName>
    </alternativeName>
</protein>
<comment type="function">
    <text evidence="1">NDH-1 shuttles electrons from an unknown electron donor, via FMN and iron-sulfur (Fe-S) centers, to quinones in the respiratory and/or the photosynthetic chain. The immediate electron acceptor for the enzyme in this species is believed to be plastoquinone. Couples the redox reaction to proton translocation, and thus conserves the redox energy in a proton gradient. Cyanobacterial NDH-1 also plays a role in inorganic carbon-concentration.</text>
</comment>
<comment type="catalytic activity">
    <reaction evidence="1">
        <text>a plastoquinone + NADH + (n+1) H(+)(in) = a plastoquinol + NAD(+) + n H(+)(out)</text>
        <dbReference type="Rhea" id="RHEA:42608"/>
        <dbReference type="Rhea" id="RHEA-COMP:9561"/>
        <dbReference type="Rhea" id="RHEA-COMP:9562"/>
        <dbReference type="ChEBI" id="CHEBI:15378"/>
        <dbReference type="ChEBI" id="CHEBI:17757"/>
        <dbReference type="ChEBI" id="CHEBI:57540"/>
        <dbReference type="ChEBI" id="CHEBI:57945"/>
        <dbReference type="ChEBI" id="CHEBI:62192"/>
    </reaction>
</comment>
<comment type="catalytic activity">
    <reaction evidence="1">
        <text>a plastoquinone + NADPH + (n+1) H(+)(in) = a plastoquinol + NADP(+) + n H(+)(out)</text>
        <dbReference type="Rhea" id="RHEA:42612"/>
        <dbReference type="Rhea" id="RHEA-COMP:9561"/>
        <dbReference type="Rhea" id="RHEA-COMP:9562"/>
        <dbReference type="ChEBI" id="CHEBI:15378"/>
        <dbReference type="ChEBI" id="CHEBI:17757"/>
        <dbReference type="ChEBI" id="CHEBI:57783"/>
        <dbReference type="ChEBI" id="CHEBI:58349"/>
        <dbReference type="ChEBI" id="CHEBI:62192"/>
    </reaction>
</comment>
<comment type="subunit">
    <text evidence="1">NDH-1 can be composed of about 15 different subunits; different subcomplexes with different compositions have been identified which probably have different functions.</text>
</comment>
<comment type="subcellular location">
    <subcellularLocation>
        <location evidence="1">Cellular thylakoid membrane</location>
        <topology evidence="1">Peripheral membrane protein</topology>
        <orientation evidence="1">Cytoplasmic side</orientation>
    </subcellularLocation>
</comment>
<comment type="similarity">
    <text evidence="1">Belongs to the complex I 30 kDa subunit family.</text>
</comment>
<evidence type="ECO:0000255" key="1">
    <source>
        <dbReference type="HAMAP-Rule" id="MF_01357"/>
    </source>
</evidence>
<sequence length="176" mass="20292">MAEEESKPVPAEKEESLVQAGKVSQWLTENGFDHEFLAPDKNGVEIIKVSADFLLPTATALYAYGFNYLQCQGGIDLGPGQELVSMYHLIKVGDNSDRPEEVRVKVFLPRENPVVPSVYWIWKTADWQERESYDMFGIIYEGHPNLKRLLMPEDWVGWPLRKDYISPDFYELQDAY</sequence>
<organism>
    <name type="scientific">Nostoc punctiforme (strain ATCC 29133 / PCC 73102)</name>
    <dbReference type="NCBI Taxonomy" id="63737"/>
    <lineage>
        <taxon>Bacteria</taxon>
        <taxon>Bacillati</taxon>
        <taxon>Cyanobacteriota</taxon>
        <taxon>Cyanophyceae</taxon>
        <taxon>Nostocales</taxon>
        <taxon>Nostocaceae</taxon>
        <taxon>Nostoc</taxon>
    </lineage>
</organism>
<gene>
    <name evidence="1" type="primary">ndhJ</name>
    <name type="ordered locus">Npun_R5546</name>
</gene>
<name>NDHJ_NOSP7</name>
<feature type="chain" id="PRO_0000358155" description="NAD(P)H-quinone oxidoreductase subunit J">
    <location>
        <begin position="1"/>
        <end position="176"/>
    </location>
</feature>
<proteinExistence type="inferred from homology"/>